<reference key="1">
    <citation type="submission" date="2006-10" db="EMBL/GenBank/DDBJ databases">
        <authorList>
            <person name="Fleischmann R.D."/>
            <person name="Dodson R.J."/>
            <person name="Haft D.H."/>
            <person name="Merkel J.S."/>
            <person name="Nelson W.C."/>
            <person name="Fraser C.M."/>
        </authorList>
    </citation>
    <scope>NUCLEOTIDE SEQUENCE [LARGE SCALE GENOMIC DNA]</scope>
    <source>
        <strain>ATCC 700084 / mc(2)155</strain>
    </source>
</reference>
<reference key="2">
    <citation type="journal article" date="2007" name="Genome Biol.">
        <title>Interrupted coding sequences in Mycobacterium smegmatis: authentic mutations or sequencing errors?</title>
        <authorList>
            <person name="Deshayes C."/>
            <person name="Perrodou E."/>
            <person name="Gallien S."/>
            <person name="Euphrasie D."/>
            <person name="Schaeffer C."/>
            <person name="Van-Dorsselaer A."/>
            <person name="Poch O."/>
            <person name="Lecompte O."/>
            <person name="Reyrat J.-M."/>
        </authorList>
    </citation>
    <scope>NUCLEOTIDE SEQUENCE [LARGE SCALE GENOMIC DNA]</scope>
    <source>
        <strain>ATCC 700084 / mc(2)155</strain>
    </source>
</reference>
<reference key="3">
    <citation type="journal article" date="2009" name="Genome Res.">
        <title>Ortho-proteogenomics: multiple proteomes investigation through orthology and a new MS-based protocol.</title>
        <authorList>
            <person name="Gallien S."/>
            <person name="Perrodou E."/>
            <person name="Carapito C."/>
            <person name="Deshayes C."/>
            <person name="Reyrat J.-M."/>
            <person name="Van Dorsselaer A."/>
            <person name="Poch O."/>
            <person name="Schaeffer C."/>
            <person name="Lecompte O."/>
        </authorList>
    </citation>
    <scope>NUCLEOTIDE SEQUENCE [LARGE SCALE GENOMIC DNA]</scope>
    <scope>IDENTIFICATION BY MASS SPECTROMETRY [LARGE SCALE ANALYSIS]</scope>
    <scope>IDENTIFICATION OF N-TERMINUS</scope>
    <source>
        <strain>ATCC 700084 / mc(2)155</strain>
    </source>
</reference>
<organism>
    <name type="scientific">Mycolicibacterium smegmatis (strain ATCC 700084 / mc(2)155)</name>
    <name type="common">Mycobacterium smegmatis</name>
    <dbReference type="NCBI Taxonomy" id="246196"/>
    <lineage>
        <taxon>Bacteria</taxon>
        <taxon>Bacillati</taxon>
        <taxon>Actinomycetota</taxon>
        <taxon>Actinomycetes</taxon>
        <taxon>Mycobacteriales</taxon>
        <taxon>Mycobacteriaceae</taxon>
        <taxon>Mycolicibacterium</taxon>
    </lineage>
</organism>
<sequence>MDLFEYQAKELFAKHNVPTSPGRVTDSAEDAKTIAEEIGRPVMVKAQVKTGGRGKAGGVKYAATPDDAFTHANNILGLDIKGHVVKKLLVAEASDIAEEYYISFLLDRANRTYLAMCSVEGGMEIEEVAATKPERLAKVPVDAVKGVDLAFARSIAEQGHLPAEVLDAAAVTIQKLWEVFVKEDATLVEVNPLVRTPDDQILALDGKVTLDENAGFRQPGHAEFEDRDATDPLELKAKENDLNYVKLDGQVGIIGNGAGLVMSTLDVVAYAGENHGGVKPANFLDIGGGASAAVMAAGLDVILGDSQVKSVFVNVFGGITACDAVANGIVQALQILGDEANKPLVVRLDGNNVEEGRRILAEANHPLVIQAETMDAGADKAAELANK</sequence>
<name>SUCC_MYCS2</name>
<comment type="function">
    <text evidence="1">Succinyl-CoA synthetase functions in the citric acid cycle (TCA), coupling the hydrolysis of succinyl-CoA to the synthesis of either ATP or GTP and thus represents the only step of substrate-level phosphorylation in the TCA. The beta subunit provides nucleotide specificity of the enzyme and binds the substrate succinate, while the binding sites for coenzyme A and phosphate are found in the alpha subunit.</text>
</comment>
<comment type="catalytic activity">
    <reaction evidence="1">
        <text>succinate + ATP + CoA = succinyl-CoA + ADP + phosphate</text>
        <dbReference type="Rhea" id="RHEA:17661"/>
        <dbReference type="ChEBI" id="CHEBI:30031"/>
        <dbReference type="ChEBI" id="CHEBI:30616"/>
        <dbReference type="ChEBI" id="CHEBI:43474"/>
        <dbReference type="ChEBI" id="CHEBI:57287"/>
        <dbReference type="ChEBI" id="CHEBI:57292"/>
        <dbReference type="ChEBI" id="CHEBI:456216"/>
        <dbReference type="EC" id="6.2.1.5"/>
    </reaction>
    <physiologicalReaction direction="right-to-left" evidence="1">
        <dbReference type="Rhea" id="RHEA:17663"/>
    </physiologicalReaction>
</comment>
<comment type="catalytic activity">
    <reaction evidence="1">
        <text>GTP + succinate + CoA = succinyl-CoA + GDP + phosphate</text>
        <dbReference type="Rhea" id="RHEA:22120"/>
        <dbReference type="ChEBI" id="CHEBI:30031"/>
        <dbReference type="ChEBI" id="CHEBI:37565"/>
        <dbReference type="ChEBI" id="CHEBI:43474"/>
        <dbReference type="ChEBI" id="CHEBI:57287"/>
        <dbReference type="ChEBI" id="CHEBI:57292"/>
        <dbReference type="ChEBI" id="CHEBI:58189"/>
    </reaction>
    <physiologicalReaction direction="right-to-left" evidence="1">
        <dbReference type="Rhea" id="RHEA:22122"/>
    </physiologicalReaction>
</comment>
<comment type="cofactor">
    <cofactor evidence="1">
        <name>Mg(2+)</name>
        <dbReference type="ChEBI" id="CHEBI:18420"/>
    </cofactor>
    <text evidence="1">Binds 1 Mg(2+) ion per subunit.</text>
</comment>
<comment type="pathway">
    <text evidence="1">Carbohydrate metabolism; tricarboxylic acid cycle; succinate from succinyl-CoA (ligase route): step 1/1.</text>
</comment>
<comment type="subunit">
    <text evidence="1">Heterotetramer of two alpha and two beta subunits.</text>
</comment>
<comment type="similarity">
    <text evidence="1">Belongs to the succinate/malate CoA ligase beta subunit family.</text>
</comment>
<keyword id="KW-0067">ATP-binding</keyword>
<keyword id="KW-0436">Ligase</keyword>
<keyword id="KW-0460">Magnesium</keyword>
<keyword id="KW-0479">Metal-binding</keyword>
<keyword id="KW-0547">Nucleotide-binding</keyword>
<keyword id="KW-1185">Reference proteome</keyword>
<keyword id="KW-0816">Tricarboxylic acid cycle</keyword>
<dbReference type="EC" id="6.2.1.5" evidence="1"/>
<dbReference type="EMBL" id="CP000480">
    <property type="protein sequence ID" value="ABK71969.1"/>
    <property type="molecule type" value="Genomic_DNA"/>
</dbReference>
<dbReference type="EMBL" id="CP001663">
    <property type="protein sequence ID" value="AFP41814.1"/>
    <property type="molecule type" value="Genomic_DNA"/>
</dbReference>
<dbReference type="RefSeq" id="WP_011730595.1">
    <property type="nucleotide sequence ID" value="NZ_SIJM01000006.1"/>
</dbReference>
<dbReference type="RefSeq" id="YP_889762.1">
    <property type="nucleotide sequence ID" value="NC_008596.1"/>
</dbReference>
<dbReference type="SMR" id="A0R3M4"/>
<dbReference type="STRING" id="246196.MSMEG_5525"/>
<dbReference type="PaxDb" id="246196-MSMEI_5373"/>
<dbReference type="GeneID" id="93460173"/>
<dbReference type="KEGG" id="msb:LJ00_27315"/>
<dbReference type="KEGG" id="msg:MSMEI_5373"/>
<dbReference type="KEGG" id="msm:MSMEG_5525"/>
<dbReference type="PATRIC" id="fig|246196.19.peg.5385"/>
<dbReference type="eggNOG" id="COG0045">
    <property type="taxonomic scope" value="Bacteria"/>
</dbReference>
<dbReference type="OrthoDB" id="9802602at2"/>
<dbReference type="UniPathway" id="UPA00223">
    <property type="reaction ID" value="UER00999"/>
</dbReference>
<dbReference type="Proteomes" id="UP000000757">
    <property type="component" value="Chromosome"/>
</dbReference>
<dbReference type="Proteomes" id="UP000006158">
    <property type="component" value="Chromosome"/>
</dbReference>
<dbReference type="GO" id="GO:0005829">
    <property type="term" value="C:cytosol"/>
    <property type="evidence" value="ECO:0007669"/>
    <property type="project" value="TreeGrafter"/>
</dbReference>
<dbReference type="GO" id="GO:0042709">
    <property type="term" value="C:succinate-CoA ligase complex"/>
    <property type="evidence" value="ECO:0007669"/>
    <property type="project" value="TreeGrafter"/>
</dbReference>
<dbReference type="GO" id="GO:0005524">
    <property type="term" value="F:ATP binding"/>
    <property type="evidence" value="ECO:0007669"/>
    <property type="project" value="UniProtKB-UniRule"/>
</dbReference>
<dbReference type="GO" id="GO:0000287">
    <property type="term" value="F:magnesium ion binding"/>
    <property type="evidence" value="ECO:0007669"/>
    <property type="project" value="UniProtKB-UniRule"/>
</dbReference>
<dbReference type="GO" id="GO:0004775">
    <property type="term" value="F:succinate-CoA ligase (ADP-forming) activity"/>
    <property type="evidence" value="ECO:0007669"/>
    <property type="project" value="UniProtKB-UniRule"/>
</dbReference>
<dbReference type="GO" id="GO:0004776">
    <property type="term" value="F:succinate-CoA ligase (GDP-forming) activity"/>
    <property type="evidence" value="ECO:0007669"/>
    <property type="project" value="RHEA"/>
</dbReference>
<dbReference type="GO" id="GO:0006104">
    <property type="term" value="P:succinyl-CoA metabolic process"/>
    <property type="evidence" value="ECO:0007669"/>
    <property type="project" value="TreeGrafter"/>
</dbReference>
<dbReference type="GO" id="GO:0006099">
    <property type="term" value="P:tricarboxylic acid cycle"/>
    <property type="evidence" value="ECO:0007669"/>
    <property type="project" value="UniProtKB-UniRule"/>
</dbReference>
<dbReference type="FunFam" id="3.30.1490.20:FF:000014">
    <property type="entry name" value="Succinate--CoA ligase [ADP-forming] subunit beta"/>
    <property type="match status" value="1"/>
</dbReference>
<dbReference type="FunFam" id="3.30.470.20:FF:000002">
    <property type="entry name" value="Succinate--CoA ligase [ADP-forming] subunit beta"/>
    <property type="match status" value="1"/>
</dbReference>
<dbReference type="FunFam" id="3.40.50.261:FF:000007">
    <property type="entry name" value="Succinate--CoA ligase [ADP-forming] subunit beta"/>
    <property type="match status" value="1"/>
</dbReference>
<dbReference type="Gene3D" id="3.30.1490.20">
    <property type="entry name" value="ATP-grasp fold, A domain"/>
    <property type="match status" value="1"/>
</dbReference>
<dbReference type="Gene3D" id="3.30.470.20">
    <property type="entry name" value="ATP-grasp fold, B domain"/>
    <property type="match status" value="1"/>
</dbReference>
<dbReference type="Gene3D" id="3.40.50.261">
    <property type="entry name" value="Succinyl-CoA synthetase domains"/>
    <property type="match status" value="1"/>
</dbReference>
<dbReference type="HAMAP" id="MF_00558">
    <property type="entry name" value="Succ_CoA_beta"/>
    <property type="match status" value="1"/>
</dbReference>
<dbReference type="InterPro" id="IPR011761">
    <property type="entry name" value="ATP-grasp"/>
</dbReference>
<dbReference type="InterPro" id="IPR013650">
    <property type="entry name" value="ATP-grasp_succ-CoA_synth-type"/>
</dbReference>
<dbReference type="InterPro" id="IPR013815">
    <property type="entry name" value="ATP_grasp_subdomain_1"/>
</dbReference>
<dbReference type="InterPro" id="IPR017866">
    <property type="entry name" value="Succ-CoA_synthase_bsu_CS"/>
</dbReference>
<dbReference type="InterPro" id="IPR005811">
    <property type="entry name" value="SUCC_ACL_C"/>
</dbReference>
<dbReference type="InterPro" id="IPR005809">
    <property type="entry name" value="Succ_CoA_ligase-like_bsu"/>
</dbReference>
<dbReference type="InterPro" id="IPR016102">
    <property type="entry name" value="Succinyl-CoA_synth-like"/>
</dbReference>
<dbReference type="NCBIfam" id="NF001913">
    <property type="entry name" value="PRK00696.1"/>
    <property type="match status" value="1"/>
</dbReference>
<dbReference type="NCBIfam" id="TIGR01016">
    <property type="entry name" value="sucCoAbeta"/>
    <property type="match status" value="1"/>
</dbReference>
<dbReference type="PANTHER" id="PTHR11815:SF10">
    <property type="entry name" value="SUCCINATE--COA LIGASE [GDP-FORMING] SUBUNIT BETA, MITOCHONDRIAL"/>
    <property type="match status" value="1"/>
</dbReference>
<dbReference type="PANTHER" id="PTHR11815">
    <property type="entry name" value="SUCCINYL-COA SYNTHETASE BETA CHAIN"/>
    <property type="match status" value="1"/>
</dbReference>
<dbReference type="Pfam" id="PF08442">
    <property type="entry name" value="ATP-grasp_2"/>
    <property type="match status" value="1"/>
</dbReference>
<dbReference type="Pfam" id="PF00549">
    <property type="entry name" value="Ligase_CoA"/>
    <property type="match status" value="1"/>
</dbReference>
<dbReference type="PIRSF" id="PIRSF001554">
    <property type="entry name" value="SucCS_beta"/>
    <property type="match status" value="1"/>
</dbReference>
<dbReference type="SUPFAM" id="SSF56059">
    <property type="entry name" value="Glutathione synthetase ATP-binding domain-like"/>
    <property type="match status" value="1"/>
</dbReference>
<dbReference type="SUPFAM" id="SSF52210">
    <property type="entry name" value="Succinyl-CoA synthetase domains"/>
    <property type="match status" value="1"/>
</dbReference>
<dbReference type="PROSITE" id="PS50975">
    <property type="entry name" value="ATP_GRASP"/>
    <property type="match status" value="1"/>
</dbReference>
<dbReference type="PROSITE" id="PS01217">
    <property type="entry name" value="SUCCINYL_COA_LIG_3"/>
    <property type="match status" value="1"/>
</dbReference>
<feature type="chain" id="PRO_1000082128" description="Succinate--CoA ligase [ADP-forming] subunit beta">
    <location>
        <begin position="1"/>
        <end position="387"/>
    </location>
</feature>
<feature type="domain" description="ATP-grasp" evidence="1">
    <location>
        <begin position="9"/>
        <end position="236"/>
    </location>
</feature>
<feature type="binding site" evidence="1">
    <location>
        <position position="45"/>
    </location>
    <ligand>
        <name>ATP</name>
        <dbReference type="ChEBI" id="CHEBI:30616"/>
    </ligand>
</feature>
<feature type="binding site" evidence="1">
    <location>
        <begin position="52"/>
        <end position="54"/>
    </location>
    <ligand>
        <name>ATP</name>
        <dbReference type="ChEBI" id="CHEBI:30616"/>
    </ligand>
</feature>
<feature type="binding site" evidence="1">
    <location>
        <position position="94"/>
    </location>
    <ligand>
        <name>ATP</name>
        <dbReference type="ChEBI" id="CHEBI:30616"/>
    </ligand>
</feature>
<feature type="binding site" evidence="1">
    <location>
        <position position="99"/>
    </location>
    <ligand>
        <name>ATP</name>
        <dbReference type="ChEBI" id="CHEBI:30616"/>
    </ligand>
</feature>
<feature type="binding site" evidence="1">
    <location>
        <position position="191"/>
    </location>
    <ligand>
        <name>Mg(2+)</name>
        <dbReference type="ChEBI" id="CHEBI:18420"/>
    </ligand>
</feature>
<feature type="binding site" evidence="1">
    <location>
        <position position="205"/>
    </location>
    <ligand>
        <name>Mg(2+)</name>
        <dbReference type="ChEBI" id="CHEBI:18420"/>
    </ligand>
</feature>
<feature type="binding site" evidence="1">
    <location>
        <position position="256"/>
    </location>
    <ligand>
        <name>substrate</name>
        <note>ligand shared with subunit alpha</note>
    </ligand>
</feature>
<feature type="binding site" evidence="1">
    <location>
        <begin position="318"/>
        <end position="320"/>
    </location>
    <ligand>
        <name>substrate</name>
        <note>ligand shared with subunit alpha</note>
    </ligand>
</feature>
<gene>
    <name evidence="1" type="primary">sucC</name>
    <name type="ordered locus">MSMEG_5525</name>
    <name type="ordered locus">MSMEI_5373</name>
</gene>
<proteinExistence type="evidence at protein level"/>
<evidence type="ECO:0000255" key="1">
    <source>
        <dbReference type="HAMAP-Rule" id="MF_00558"/>
    </source>
</evidence>
<protein>
    <recommendedName>
        <fullName evidence="1">Succinate--CoA ligase [ADP-forming] subunit beta</fullName>
        <ecNumber evidence="1">6.2.1.5</ecNumber>
    </recommendedName>
    <alternativeName>
        <fullName evidence="1">Succinyl-CoA synthetase subunit beta</fullName>
        <shortName evidence="1">SCS-beta</shortName>
    </alternativeName>
</protein>
<accession>A0R3M4</accession>
<accession>I7GFE8</accession>